<proteinExistence type="inferred from homology"/>
<evidence type="ECO:0000255" key="1">
    <source>
        <dbReference type="HAMAP-Rule" id="MF_00061"/>
    </source>
</evidence>
<accession>Q3BX03</accession>
<protein>
    <recommendedName>
        <fullName evidence="1">4-diphosphocytidyl-2-C-methyl-D-erythritol kinase</fullName>
        <shortName evidence="1">CMK</shortName>
        <ecNumber evidence="1">2.7.1.148</ecNumber>
    </recommendedName>
    <alternativeName>
        <fullName evidence="1">4-(cytidine-5'-diphospho)-2-C-methyl-D-erythritol kinase</fullName>
    </alternativeName>
</protein>
<feature type="chain" id="PRO_0000235154" description="4-diphosphocytidyl-2-C-methyl-D-erythritol kinase">
    <location>
        <begin position="1"/>
        <end position="295"/>
    </location>
</feature>
<feature type="active site" evidence="1">
    <location>
        <position position="22"/>
    </location>
</feature>
<feature type="active site" evidence="1">
    <location>
        <position position="148"/>
    </location>
</feature>
<feature type="binding site" evidence="1">
    <location>
        <begin position="106"/>
        <end position="116"/>
    </location>
    <ligand>
        <name>ATP</name>
        <dbReference type="ChEBI" id="CHEBI:30616"/>
    </ligand>
</feature>
<comment type="function">
    <text evidence="1">Catalyzes the phosphorylation of the position 2 hydroxy group of 4-diphosphocytidyl-2C-methyl-D-erythritol.</text>
</comment>
<comment type="catalytic activity">
    <reaction evidence="1">
        <text>4-CDP-2-C-methyl-D-erythritol + ATP = 4-CDP-2-C-methyl-D-erythritol 2-phosphate + ADP + H(+)</text>
        <dbReference type="Rhea" id="RHEA:18437"/>
        <dbReference type="ChEBI" id="CHEBI:15378"/>
        <dbReference type="ChEBI" id="CHEBI:30616"/>
        <dbReference type="ChEBI" id="CHEBI:57823"/>
        <dbReference type="ChEBI" id="CHEBI:57919"/>
        <dbReference type="ChEBI" id="CHEBI:456216"/>
        <dbReference type="EC" id="2.7.1.148"/>
    </reaction>
</comment>
<comment type="pathway">
    <text evidence="1">Isoprenoid biosynthesis; isopentenyl diphosphate biosynthesis via DXP pathway; isopentenyl diphosphate from 1-deoxy-D-xylulose 5-phosphate: step 3/6.</text>
</comment>
<comment type="similarity">
    <text evidence="1">Belongs to the GHMP kinase family. IspE subfamily.</text>
</comment>
<gene>
    <name evidence="1" type="primary">ispE</name>
    <name type="ordered locus">XCV0979</name>
</gene>
<dbReference type="EC" id="2.7.1.148" evidence="1"/>
<dbReference type="EMBL" id="AM039952">
    <property type="protein sequence ID" value="CAJ22610.1"/>
    <property type="molecule type" value="Genomic_DNA"/>
</dbReference>
<dbReference type="RefSeq" id="WP_011346534.1">
    <property type="nucleotide sequence ID" value="NZ_CP017190.1"/>
</dbReference>
<dbReference type="SMR" id="Q3BX03"/>
<dbReference type="STRING" id="456327.BJD11_17865"/>
<dbReference type="KEGG" id="xcv:XCV0979"/>
<dbReference type="eggNOG" id="COG1947">
    <property type="taxonomic scope" value="Bacteria"/>
</dbReference>
<dbReference type="HOGENOM" id="CLU_053057_3_0_6"/>
<dbReference type="UniPathway" id="UPA00056">
    <property type="reaction ID" value="UER00094"/>
</dbReference>
<dbReference type="Proteomes" id="UP000007069">
    <property type="component" value="Chromosome"/>
</dbReference>
<dbReference type="GO" id="GO:0050515">
    <property type="term" value="F:4-(cytidine 5'-diphospho)-2-C-methyl-D-erythritol kinase activity"/>
    <property type="evidence" value="ECO:0007669"/>
    <property type="project" value="UniProtKB-UniRule"/>
</dbReference>
<dbReference type="GO" id="GO:0005524">
    <property type="term" value="F:ATP binding"/>
    <property type="evidence" value="ECO:0007669"/>
    <property type="project" value="UniProtKB-UniRule"/>
</dbReference>
<dbReference type="GO" id="GO:0019288">
    <property type="term" value="P:isopentenyl diphosphate biosynthetic process, methylerythritol 4-phosphate pathway"/>
    <property type="evidence" value="ECO:0007669"/>
    <property type="project" value="UniProtKB-UniRule"/>
</dbReference>
<dbReference type="GO" id="GO:0016114">
    <property type="term" value="P:terpenoid biosynthetic process"/>
    <property type="evidence" value="ECO:0007669"/>
    <property type="project" value="InterPro"/>
</dbReference>
<dbReference type="FunFam" id="3.30.230.10:FF:000022">
    <property type="entry name" value="4-diphosphocytidyl-2-C-methyl-D-erythritol kinase"/>
    <property type="match status" value="1"/>
</dbReference>
<dbReference type="FunFam" id="3.30.70.890:FF:000014">
    <property type="entry name" value="4-diphosphocytidyl-2-C-methyl-D-erythritol kinase"/>
    <property type="match status" value="1"/>
</dbReference>
<dbReference type="Gene3D" id="3.30.230.10">
    <property type="match status" value="1"/>
</dbReference>
<dbReference type="Gene3D" id="3.30.70.890">
    <property type="entry name" value="GHMP kinase, C-terminal domain"/>
    <property type="match status" value="1"/>
</dbReference>
<dbReference type="HAMAP" id="MF_00061">
    <property type="entry name" value="IspE"/>
    <property type="match status" value="1"/>
</dbReference>
<dbReference type="InterPro" id="IPR013750">
    <property type="entry name" value="GHMP_kinase_C_dom"/>
</dbReference>
<dbReference type="InterPro" id="IPR036554">
    <property type="entry name" value="GHMP_kinase_C_sf"/>
</dbReference>
<dbReference type="InterPro" id="IPR006204">
    <property type="entry name" value="GHMP_kinase_N_dom"/>
</dbReference>
<dbReference type="InterPro" id="IPR004424">
    <property type="entry name" value="IspE"/>
</dbReference>
<dbReference type="InterPro" id="IPR020568">
    <property type="entry name" value="Ribosomal_Su5_D2-typ_SF"/>
</dbReference>
<dbReference type="InterPro" id="IPR014721">
    <property type="entry name" value="Ribsml_uS5_D2-typ_fold_subgr"/>
</dbReference>
<dbReference type="NCBIfam" id="TIGR00154">
    <property type="entry name" value="ispE"/>
    <property type="match status" value="1"/>
</dbReference>
<dbReference type="PANTHER" id="PTHR43527">
    <property type="entry name" value="4-DIPHOSPHOCYTIDYL-2-C-METHYL-D-ERYTHRITOL KINASE, CHLOROPLASTIC"/>
    <property type="match status" value="1"/>
</dbReference>
<dbReference type="PANTHER" id="PTHR43527:SF2">
    <property type="entry name" value="4-DIPHOSPHOCYTIDYL-2-C-METHYL-D-ERYTHRITOL KINASE, CHLOROPLASTIC"/>
    <property type="match status" value="1"/>
</dbReference>
<dbReference type="Pfam" id="PF08544">
    <property type="entry name" value="GHMP_kinases_C"/>
    <property type="match status" value="1"/>
</dbReference>
<dbReference type="Pfam" id="PF00288">
    <property type="entry name" value="GHMP_kinases_N"/>
    <property type="match status" value="1"/>
</dbReference>
<dbReference type="PIRSF" id="PIRSF010376">
    <property type="entry name" value="IspE"/>
    <property type="match status" value="1"/>
</dbReference>
<dbReference type="SUPFAM" id="SSF55060">
    <property type="entry name" value="GHMP Kinase, C-terminal domain"/>
    <property type="match status" value="1"/>
</dbReference>
<dbReference type="SUPFAM" id="SSF54211">
    <property type="entry name" value="Ribosomal protein S5 domain 2-like"/>
    <property type="match status" value="1"/>
</dbReference>
<reference key="1">
    <citation type="journal article" date="2005" name="J. Bacteriol.">
        <title>Insights into genome plasticity and pathogenicity of the plant pathogenic Bacterium Xanthomonas campestris pv. vesicatoria revealed by the complete genome sequence.</title>
        <authorList>
            <person name="Thieme F."/>
            <person name="Koebnik R."/>
            <person name="Bekel T."/>
            <person name="Berger C."/>
            <person name="Boch J."/>
            <person name="Buettner D."/>
            <person name="Caldana C."/>
            <person name="Gaigalat L."/>
            <person name="Goesmann A."/>
            <person name="Kay S."/>
            <person name="Kirchner O."/>
            <person name="Lanz C."/>
            <person name="Linke B."/>
            <person name="McHardy A.C."/>
            <person name="Meyer F."/>
            <person name="Mittenhuber G."/>
            <person name="Nies D.H."/>
            <person name="Niesbach-Kloesgen U."/>
            <person name="Patschkowski T."/>
            <person name="Rueckert C."/>
            <person name="Rupp O."/>
            <person name="Schneiker S."/>
            <person name="Schuster S.C."/>
            <person name="Vorhoelter F.J."/>
            <person name="Weber E."/>
            <person name="Puehler A."/>
            <person name="Bonas U."/>
            <person name="Bartels D."/>
            <person name="Kaiser O."/>
        </authorList>
    </citation>
    <scope>NUCLEOTIDE SEQUENCE [LARGE SCALE GENOMIC DNA]</scope>
    <source>
        <strain>85-10</strain>
    </source>
</reference>
<sequence>MDRIALMDASGRDWSAWPAPAKLNLFLQITGRRADGYHLLQTVFRLLDWGDTVHLRVRRDGQIRRLGESLPGVSEDDDLVTRAARLLQSAAGTQAGAEIRVDKRIPAGGGFGGGSSDAATVLVALNALWGLGLAADVLAELGLQLGADVPVFVRGRNAWAEGVGEQLTPISLPEAAYLLVDPGVHVPTPALFRSQELTRDAALAKIADFASGSLLDNAFEPVLRRREPAVEAVFQALSRVGTPRLTGSGSGCFVEFATRAAAEQALAQLPGSLRAWVVEGAAHSPLLDALDATQV</sequence>
<organism>
    <name type="scientific">Xanthomonas euvesicatoria pv. vesicatoria (strain 85-10)</name>
    <name type="common">Xanthomonas campestris pv. vesicatoria</name>
    <dbReference type="NCBI Taxonomy" id="316273"/>
    <lineage>
        <taxon>Bacteria</taxon>
        <taxon>Pseudomonadati</taxon>
        <taxon>Pseudomonadota</taxon>
        <taxon>Gammaproteobacteria</taxon>
        <taxon>Lysobacterales</taxon>
        <taxon>Lysobacteraceae</taxon>
        <taxon>Xanthomonas</taxon>
    </lineage>
</organism>
<name>ISPE_XANE5</name>
<keyword id="KW-0067">ATP-binding</keyword>
<keyword id="KW-0414">Isoprene biosynthesis</keyword>
<keyword id="KW-0418">Kinase</keyword>
<keyword id="KW-0547">Nucleotide-binding</keyword>
<keyword id="KW-0808">Transferase</keyword>